<sequence>MKTPIRKTHPVMKIANTALVDLPSPSNISTWWNFGSLLGLFLTMQIITGIILAMHYTSEVDMAFDSISHITRNVNYGWLMRTMHMNGAAFMFICMYAHMGRGMYYSSYMLAETWNIGIIIMIATMATAFMGYVLPWGQMSFWGATVITNLVSAIPYIGTDIVYWLWGGFSVGKATLSRFFAFHFVLPFVLIALSGVHLLFLHQTGSNNPLGLNSNLDKIPFHSFFSWKDLLGFAXMILIFCTITLTFPLIMGDPENFNPANPLSTPPHIQPEWYFLFAYAILRSIPNKLGGVVALVGSLIIPATMMLTHKSMLQPMSFRPISQVIFWLFCANFIALSWIGAAPVEDPYITLGQVFSMLYFLFFLTAPMINMLEKKLSLKQ</sequence>
<name>CYB_XENBC</name>
<evidence type="ECO:0000250" key="1"/>
<evidence type="ECO:0000250" key="2">
    <source>
        <dbReference type="UniProtKB" id="P00157"/>
    </source>
</evidence>
<evidence type="ECO:0000250" key="3">
    <source>
        <dbReference type="UniProtKB" id="P00163"/>
    </source>
</evidence>
<evidence type="ECO:0000255" key="4"/>
<evidence type="ECO:0000255" key="5">
    <source>
        <dbReference type="PROSITE-ProRule" id="PRU00967"/>
    </source>
</evidence>
<evidence type="ECO:0000255" key="6">
    <source>
        <dbReference type="PROSITE-ProRule" id="PRU00968"/>
    </source>
</evidence>
<accession>A0EYN2</accession>
<reference key="1">
    <citation type="journal article" date="2006" name="Nature">
        <title>Deuterostome phylogeny reveals monophyletic chordates and the new phylum Xenoturbellida.</title>
        <authorList>
            <person name="Bourlat S.J."/>
            <person name="Juliusdottir T."/>
            <person name="Lowe C.J."/>
            <person name="Freeman R."/>
            <person name="Aronowicz J."/>
            <person name="Kirschner M."/>
            <person name="Lander E.S."/>
            <person name="Thorndyke M."/>
            <person name="Nakano H."/>
            <person name="Kohn A.B."/>
            <person name="Heyland A."/>
            <person name="Moroz L.L."/>
            <person name="Copley R.R."/>
            <person name="Telford M.J."/>
        </authorList>
    </citation>
    <scope>NUCLEOTIDE SEQUENCE [GENOMIC DNA]</scope>
</reference>
<geneLocation type="mitochondrion"/>
<keyword id="KW-0249">Electron transport</keyword>
<keyword id="KW-0349">Heme</keyword>
<keyword id="KW-0408">Iron</keyword>
<keyword id="KW-0472">Membrane</keyword>
<keyword id="KW-0479">Metal-binding</keyword>
<keyword id="KW-0496">Mitochondrion</keyword>
<keyword id="KW-0999">Mitochondrion inner membrane</keyword>
<keyword id="KW-0679">Respiratory chain</keyword>
<keyword id="KW-0812">Transmembrane</keyword>
<keyword id="KW-1133">Transmembrane helix</keyword>
<keyword id="KW-0813">Transport</keyword>
<keyword id="KW-0830">Ubiquinone</keyword>
<feature type="chain" id="PRO_0000357467" description="Cytochrome b">
    <location>
        <begin position="1"/>
        <end position="380"/>
    </location>
</feature>
<feature type="transmembrane region" description="Helical" evidence="3">
    <location>
        <begin position="34"/>
        <end position="54"/>
    </location>
</feature>
<feature type="transmembrane region" description="Helical" evidence="3">
    <location>
        <begin position="78"/>
        <end position="100"/>
    </location>
</feature>
<feature type="transmembrane region" description="Helical" evidence="3">
    <location>
        <begin position="113"/>
        <end position="133"/>
    </location>
</feature>
<feature type="transmembrane region" description="Helical" evidence="3">
    <location>
        <begin position="179"/>
        <end position="199"/>
    </location>
</feature>
<feature type="transmembrane region" description="Helical" evidence="3">
    <location>
        <begin position="225"/>
        <end position="245"/>
    </location>
</feature>
<feature type="transmembrane region" description="Helical" evidence="4">
    <location>
        <begin position="289"/>
        <end position="309"/>
    </location>
</feature>
<feature type="transmembrane region" description="Helical" evidence="4">
    <location>
        <begin position="324"/>
        <end position="344"/>
    </location>
</feature>
<feature type="transmembrane region" description="Helical" evidence="4">
    <location>
        <begin position="349"/>
        <end position="369"/>
    </location>
</feature>
<feature type="binding site" description="axial binding residue" evidence="3">
    <location>
        <position position="84"/>
    </location>
    <ligand>
        <name>heme b</name>
        <dbReference type="ChEBI" id="CHEBI:60344"/>
        <label>b562</label>
    </ligand>
    <ligandPart>
        <name>Fe</name>
        <dbReference type="ChEBI" id="CHEBI:18248"/>
    </ligandPart>
</feature>
<feature type="binding site" description="axial binding residue" evidence="3">
    <location>
        <position position="98"/>
    </location>
    <ligand>
        <name>heme b</name>
        <dbReference type="ChEBI" id="CHEBI:60344"/>
        <label>b566</label>
    </ligand>
    <ligandPart>
        <name>Fe</name>
        <dbReference type="ChEBI" id="CHEBI:18248"/>
    </ligandPart>
</feature>
<feature type="binding site" description="axial binding residue" evidence="3">
    <location>
        <position position="183"/>
    </location>
    <ligand>
        <name>heme b</name>
        <dbReference type="ChEBI" id="CHEBI:60344"/>
        <label>b562</label>
    </ligand>
    <ligandPart>
        <name>Fe</name>
        <dbReference type="ChEBI" id="CHEBI:18248"/>
    </ligandPart>
</feature>
<feature type="binding site" description="axial binding residue" evidence="3">
    <location>
        <position position="197"/>
    </location>
    <ligand>
        <name>heme b</name>
        <dbReference type="ChEBI" id="CHEBI:60344"/>
        <label>b566</label>
    </ligand>
    <ligandPart>
        <name>Fe</name>
        <dbReference type="ChEBI" id="CHEBI:18248"/>
    </ligandPart>
</feature>
<feature type="binding site" evidence="2">
    <location>
        <position position="202"/>
    </location>
    <ligand>
        <name>a ubiquinone</name>
        <dbReference type="ChEBI" id="CHEBI:16389"/>
    </ligand>
</feature>
<proteinExistence type="inferred from homology"/>
<comment type="function">
    <text evidence="3">Component of the ubiquinol-cytochrome c reductase complex (complex III or cytochrome b-c1 complex) that is part of the mitochondrial respiratory chain. The b-c1 complex mediates electron transfer from ubiquinol to cytochrome c. Contributes to the generation of a proton gradient across the mitochondrial membrane that is then used for ATP synthesis.</text>
</comment>
<comment type="cofactor">
    <cofactor evidence="3">
        <name>heme b</name>
        <dbReference type="ChEBI" id="CHEBI:60344"/>
    </cofactor>
    <text evidence="3">Binds 2 heme b groups non-covalently.</text>
</comment>
<comment type="subunit">
    <text evidence="1">The main subunits of complex b-c1 are: cytochrome b, cytochrome c1 and the Rieske protein.</text>
</comment>
<comment type="subcellular location">
    <subcellularLocation>
        <location evidence="3">Mitochondrion inner membrane</location>
        <topology evidence="3">Multi-pass membrane protein</topology>
    </subcellularLocation>
</comment>
<comment type="similarity">
    <text evidence="5 6">Belongs to the cytochrome b family.</text>
</comment>
<comment type="caution">
    <text evidence="3">The protein contains an even number of transmembrane helices, fewer than predicted by bioinformatics tools.</text>
</comment>
<organism>
    <name type="scientific">Xenoturbella bocki</name>
    <name type="common">Marine worm</name>
    <dbReference type="NCBI Taxonomy" id="242395"/>
    <lineage>
        <taxon>Eukaryota</taxon>
        <taxon>Metazoa</taxon>
        <taxon>Xenacoelomorpha</taxon>
        <taxon>Xenoturbellida</taxon>
        <taxon>Xenoturbellidae</taxon>
        <taxon>Xenoturbella</taxon>
    </lineage>
</organism>
<protein>
    <recommendedName>
        <fullName>Cytochrome b</fullName>
    </recommendedName>
    <alternativeName>
        <fullName>Complex III subunit 3</fullName>
    </alternativeName>
    <alternativeName>
        <fullName>Complex III subunit III</fullName>
    </alternativeName>
    <alternativeName>
        <fullName>Cytochrome b-c1 complex subunit 3</fullName>
    </alternativeName>
    <alternativeName>
        <fullName>Ubiquinol-cytochrome-c reductase complex cytochrome b subunit</fullName>
    </alternativeName>
</protein>
<dbReference type="EMBL" id="DQ832701">
    <property type="protein sequence ID" value="ABG54255.1"/>
    <property type="molecule type" value="Genomic_DNA"/>
</dbReference>
<dbReference type="RefSeq" id="YP_850987.1">
    <property type="nucleotide sequence ID" value="NC_008556.1"/>
</dbReference>
<dbReference type="GeneID" id="4466532"/>
<dbReference type="CTD" id="4519"/>
<dbReference type="GO" id="GO:0005743">
    <property type="term" value="C:mitochondrial inner membrane"/>
    <property type="evidence" value="ECO:0007669"/>
    <property type="project" value="UniProtKB-SubCell"/>
</dbReference>
<dbReference type="GO" id="GO:0045275">
    <property type="term" value="C:respiratory chain complex III"/>
    <property type="evidence" value="ECO:0007669"/>
    <property type="project" value="InterPro"/>
</dbReference>
<dbReference type="GO" id="GO:0046872">
    <property type="term" value="F:metal ion binding"/>
    <property type="evidence" value="ECO:0007669"/>
    <property type="project" value="UniProtKB-KW"/>
</dbReference>
<dbReference type="GO" id="GO:0008121">
    <property type="term" value="F:ubiquinol-cytochrome-c reductase activity"/>
    <property type="evidence" value="ECO:0007669"/>
    <property type="project" value="InterPro"/>
</dbReference>
<dbReference type="GO" id="GO:0006122">
    <property type="term" value="P:mitochondrial electron transport, ubiquinol to cytochrome c"/>
    <property type="evidence" value="ECO:0007669"/>
    <property type="project" value="TreeGrafter"/>
</dbReference>
<dbReference type="CDD" id="cd00290">
    <property type="entry name" value="cytochrome_b_C"/>
    <property type="match status" value="1"/>
</dbReference>
<dbReference type="CDD" id="cd00284">
    <property type="entry name" value="Cytochrome_b_N"/>
    <property type="match status" value="1"/>
</dbReference>
<dbReference type="FunFam" id="1.20.810.10:FF:000002">
    <property type="entry name" value="Cytochrome b"/>
    <property type="match status" value="1"/>
</dbReference>
<dbReference type="Gene3D" id="1.20.810.10">
    <property type="entry name" value="Cytochrome Bc1 Complex, Chain C"/>
    <property type="match status" value="1"/>
</dbReference>
<dbReference type="InterPro" id="IPR005798">
    <property type="entry name" value="Cyt_b/b6_C"/>
</dbReference>
<dbReference type="InterPro" id="IPR036150">
    <property type="entry name" value="Cyt_b/b6_C_sf"/>
</dbReference>
<dbReference type="InterPro" id="IPR005797">
    <property type="entry name" value="Cyt_b/b6_N"/>
</dbReference>
<dbReference type="InterPro" id="IPR027387">
    <property type="entry name" value="Cytb/b6-like_sf"/>
</dbReference>
<dbReference type="InterPro" id="IPR030689">
    <property type="entry name" value="Cytochrome_b"/>
</dbReference>
<dbReference type="InterPro" id="IPR048260">
    <property type="entry name" value="Cytochrome_b_C_euk/bac"/>
</dbReference>
<dbReference type="InterPro" id="IPR048259">
    <property type="entry name" value="Cytochrome_b_N_euk/bac"/>
</dbReference>
<dbReference type="InterPro" id="IPR016174">
    <property type="entry name" value="Di-haem_cyt_TM"/>
</dbReference>
<dbReference type="PANTHER" id="PTHR19271">
    <property type="entry name" value="CYTOCHROME B"/>
    <property type="match status" value="1"/>
</dbReference>
<dbReference type="PANTHER" id="PTHR19271:SF16">
    <property type="entry name" value="CYTOCHROME B"/>
    <property type="match status" value="1"/>
</dbReference>
<dbReference type="Pfam" id="PF00032">
    <property type="entry name" value="Cytochrom_B_C"/>
    <property type="match status" value="1"/>
</dbReference>
<dbReference type="Pfam" id="PF00033">
    <property type="entry name" value="Cytochrome_B"/>
    <property type="match status" value="1"/>
</dbReference>
<dbReference type="PIRSF" id="PIRSF038885">
    <property type="entry name" value="COB"/>
    <property type="match status" value="1"/>
</dbReference>
<dbReference type="SUPFAM" id="SSF81648">
    <property type="entry name" value="a domain/subunit of cytochrome bc1 complex (Ubiquinol-cytochrome c reductase)"/>
    <property type="match status" value="1"/>
</dbReference>
<dbReference type="SUPFAM" id="SSF81342">
    <property type="entry name" value="Transmembrane di-heme cytochromes"/>
    <property type="match status" value="1"/>
</dbReference>
<dbReference type="PROSITE" id="PS51003">
    <property type="entry name" value="CYTB_CTER"/>
    <property type="match status" value="1"/>
</dbReference>
<dbReference type="PROSITE" id="PS51002">
    <property type="entry name" value="CYTB_NTER"/>
    <property type="match status" value="1"/>
</dbReference>
<gene>
    <name type="primary">mt:Cyt-b</name>
    <name type="synonym">Cob</name>
    <name type="synonym">cytb</name>
</gene>